<keyword id="KW-0067">ATP-binding</keyword>
<keyword id="KW-1048">Host nucleus</keyword>
<keyword id="KW-0426">Late protein</keyword>
<keyword id="KW-0479">Metal-binding</keyword>
<keyword id="KW-0547">Nucleotide-binding</keyword>
<keyword id="KW-1185">Reference proteome</keyword>
<keyword id="KW-0231">Viral genome packaging</keyword>
<keyword id="KW-1188">Viral release from host cell</keyword>
<keyword id="KW-0862">Zinc</keyword>
<keyword id="KW-0863">Zinc-finger</keyword>
<feature type="chain" id="PRO_0000406559" description="Tripartite terminase subunit 1">
    <location>
        <begin position="1"/>
        <end position="793"/>
    </location>
</feature>
<feature type="zinc finger region" description="C3H1-type" evidence="1">
    <location>
        <begin position="206"/>
        <end position="234"/>
    </location>
</feature>
<feature type="binding site" evidence="1">
    <location>
        <begin position="697"/>
        <end position="704"/>
    </location>
    <ligand>
        <name>ATP</name>
        <dbReference type="ChEBI" id="CHEBI:30616"/>
    </ligand>
</feature>
<gene>
    <name evidence="1" type="primary">TRM1</name>
    <name type="ordered locus">MDV041</name>
</gene>
<dbReference type="EMBL" id="AF243438">
    <property type="protein sequence ID" value="AAG14221.1"/>
    <property type="molecule type" value="Genomic_DNA"/>
</dbReference>
<dbReference type="RefSeq" id="YP_001033957.1">
    <property type="nucleotide sequence ID" value="NC_002229.3"/>
</dbReference>
<dbReference type="SMR" id="Q77MS2"/>
<dbReference type="GeneID" id="4811502"/>
<dbReference type="KEGG" id="vg:4811502"/>
<dbReference type="Proteomes" id="UP000008072">
    <property type="component" value="Segment"/>
</dbReference>
<dbReference type="GO" id="GO:0042025">
    <property type="term" value="C:host cell nucleus"/>
    <property type="evidence" value="ECO:0007669"/>
    <property type="project" value="UniProtKB-SubCell"/>
</dbReference>
<dbReference type="GO" id="GO:0005524">
    <property type="term" value="F:ATP binding"/>
    <property type="evidence" value="ECO:0007669"/>
    <property type="project" value="UniProtKB-KW"/>
</dbReference>
<dbReference type="GO" id="GO:0008270">
    <property type="term" value="F:zinc ion binding"/>
    <property type="evidence" value="ECO:0007669"/>
    <property type="project" value="UniProtKB-KW"/>
</dbReference>
<dbReference type="GO" id="GO:0019073">
    <property type="term" value="P:viral DNA genome packaging"/>
    <property type="evidence" value="ECO:0007669"/>
    <property type="project" value="InterPro"/>
</dbReference>
<dbReference type="HAMAP" id="MF_04014">
    <property type="entry name" value="HSV_TRM1"/>
    <property type="match status" value="1"/>
</dbReference>
<dbReference type="InterPro" id="IPR000501">
    <property type="entry name" value="UL28/UL56"/>
</dbReference>
<dbReference type="Pfam" id="PF01366">
    <property type="entry name" value="PRTP"/>
    <property type="match status" value="1"/>
</dbReference>
<accession>Q77MS2</accession>
<protein>
    <recommendedName>
        <fullName evidence="1">Tripartite terminase subunit 1</fullName>
    </recommendedName>
</protein>
<organism>
    <name type="scientific">Gallid herpesvirus 2 (strain Chicken/Md5/ATCC VR-987)</name>
    <name type="common">GaHV-2</name>
    <name type="synonym">Marek's disease herpesvirus type 1</name>
    <dbReference type="NCBI Taxonomy" id="10389"/>
    <lineage>
        <taxon>Viruses</taxon>
        <taxon>Duplodnaviria</taxon>
        <taxon>Heunggongvirae</taxon>
        <taxon>Peploviricota</taxon>
        <taxon>Herviviricetes</taxon>
        <taxon>Herpesvirales</taxon>
        <taxon>Orthoherpesviridae</taxon>
        <taxon>Alphaherpesvirinae</taxon>
        <taxon>Mardivirus</taxon>
        <taxon>Mardivirus gallidalpha2</taxon>
        <taxon>Gallid alphaherpesvirus 2</taxon>
    </lineage>
</organism>
<evidence type="ECO:0000255" key="1">
    <source>
        <dbReference type="HAMAP-Rule" id="MF_04014"/>
    </source>
</evidence>
<name>TRM1_GAHVM</name>
<sequence>MLGMSHNRLQSQGTEHDKFATQKLFAIWGQIQSYLFQVELLKRCDPTVGVRMINRLKLNVLMIYYLEKKMVPALKEQREMNLTPLTYGLWLALRRAKLEGELLLDALCEFKDGGNLRDFFRKSMSMCGDCPYHSTVELDTYGGKVSTEIKFLHDVENVLKQLNYCHLILKADTVENFMVSLDNYLLKTLGSGSVVPPELYDPSQPCSVCFEELCVTANSGDSTHKRIVRKICDHITKQINIRVNSDDMVTHLPHATYVPDDKRTTAQTALDVIQSTMRDTTTENDSNISVSKAAAAALDAHNVFLPASGDLYAISELQFWIASSGRKLHQPRGNTVESFADNLEALVSKERLFDLRTSIVETAVFDRRMDHFERVFAQEIEHMNAADRLLLGGRAAAPDDIIEALIKACYDHHMSAPLLKRLLYPDEAAHDALKTVLERVSSHCIGNDIQCQDGDGTCGERMNETGHFRTNDSFAMSTTSLGHDEWLEMVKSASSDVARRRKMYAERLTKKSLASLDKCITEQRHELEKMLRVNVYGEVLIDSYTALFNGFRSRKRLLEAVKNCCANIIDNRNSDDAFDAHRFMQTSLLKHRIDPAMLPSLTHKFFQLVNGPMFSHDRHRFAQPSNTALYFSVENVGLLPHLKEEMARFMFHSSRKTDWTVSKFRGFYDFSTIDNVTAAHRMAWKYIKELIFATALFSSVFKCGELHICRADSLQINSNGDYVWKNGIYITYETEYPLIMILGSESSTSETQNMTAIIDTDVFSLLYSILQYMAPVTADQVRVEQITNSHAPI</sequence>
<reference key="1">
    <citation type="journal article" date="2000" name="J. Virol.">
        <title>The genome of a very virulent Marek's disease virus.</title>
        <authorList>
            <person name="Tulman E.R."/>
            <person name="Afonso C.L."/>
            <person name="Lu Z."/>
            <person name="Zsak L."/>
            <person name="Rock D.L."/>
            <person name="Kutish G.F."/>
        </authorList>
    </citation>
    <scope>NUCLEOTIDE SEQUENCE [LARGE SCALE GENOMIC DNA]</scope>
</reference>
<organismHost>
    <name type="scientific">Gallus gallus</name>
    <name type="common">Chicken</name>
    <dbReference type="NCBI Taxonomy" id="9031"/>
</organismHost>
<comment type="function">
    <text evidence="1">Component of the molecular motor that translocates viral genomic DNA in empty capsid during DNA packaging. Forms a tripartite terminase complex together with TRM2 and TRM3 in the host cytoplasm. Once the complex reaches the host nucleus, it interacts with the capsid portal vertex. This portal forms a ring in which genomic DNA is translocated into the capsid. TRM1 carries an endonuclease activity that plays an important role for the cleavage of concatemeric viral DNA into unit length genomes.</text>
</comment>
<comment type="subunit">
    <text evidence="1">Associates with TRM2 and TRM3 to form the tripartite terminase complex. Interacts with portal protein.</text>
</comment>
<comment type="subcellular location">
    <subcellularLocation>
        <location evidence="1">Host nucleus</location>
    </subcellularLocation>
    <text evidence="1">Found associated with the external surface of the viral capsid during assembly and DNA packaging, but seems absent in extracellular mature virions.</text>
</comment>
<comment type="similarity">
    <text evidence="1">Belongs to the herpesviridae TRM1 protein family.</text>
</comment>
<proteinExistence type="inferred from homology"/>